<keyword id="KW-0002">3D-structure</keyword>
<keyword id="KW-0520">NAD</keyword>
<keyword id="KW-0560">Oxidoreductase</keyword>
<keyword id="KW-1185">Reference proteome</keyword>
<keyword id="KW-0346">Stress response</keyword>
<proteinExistence type="evidence at protein level"/>
<name>ALDY_BACSU</name>
<reference key="1">
    <citation type="journal article" date="1996" name="Microbiology">
        <title>Sequencing of a 65 kb region of the Bacillus subtilis genome containing the lic and cel loci, and creation of a 177 kb contig covering the gnt-sacXY region.</title>
        <authorList>
            <person name="Yoshida K."/>
            <person name="Shindo K."/>
            <person name="Sano H."/>
            <person name="Seki S."/>
            <person name="Fujimura M."/>
            <person name="Yanai N."/>
            <person name="Miwa Y."/>
            <person name="Fujita Y."/>
        </authorList>
    </citation>
    <scope>NUCLEOTIDE SEQUENCE [GENOMIC DNA]</scope>
    <source>
        <strain>168 / BGSC1A1</strain>
    </source>
</reference>
<reference key="2">
    <citation type="journal article" date="1997" name="Nature">
        <title>The complete genome sequence of the Gram-positive bacterium Bacillus subtilis.</title>
        <authorList>
            <person name="Kunst F."/>
            <person name="Ogasawara N."/>
            <person name="Moszer I."/>
            <person name="Albertini A.M."/>
            <person name="Alloni G."/>
            <person name="Azevedo V."/>
            <person name="Bertero M.G."/>
            <person name="Bessieres P."/>
            <person name="Bolotin A."/>
            <person name="Borchert S."/>
            <person name="Borriss R."/>
            <person name="Boursier L."/>
            <person name="Brans A."/>
            <person name="Braun M."/>
            <person name="Brignell S.C."/>
            <person name="Bron S."/>
            <person name="Brouillet S."/>
            <person name="Bruschi C.V."/>
            <person name="Caldwell B."/>
            <person name="Capuano V."/>
            <person name="Carter N.M."/>
            <person name="Choi S.-K."/>
            <person name="Codani J.-J."/>
            <person name="Connerton I.F."/>
            <person name="Cummings N.J."/>
            <person name="Daniel R.A."/>
            <person name="Denizot F."/>
            <person name="Devine K.M."/>
            <person name="Duesterhoeft A."/>
            <person name="Ehrlich S.D."/>
            <person name="Emmerson P.T."/>
            <person name="Entian K.-D."/>
            <person name="Errington J."/>
            <person name="Fabret C."/>
            <person name="Ferrari E."/>
            <person name="Foulger D."/>
            <person name="Fritz C."/>
            <person name="Fujita M."/>
            <person name="Fujita Y."/>
            <person name="Fuma S."/>
            <person name="Galizzi A."/>
            <person name="Galleron N."/>
            <person name="Ghim S.-Y."/>
            <person name="Glaser P."/>
            <person name="Goffeau A."/>
            <person name="Golightly E.J."/>
            <person name="Grandi G."/>
            <person name="Guiseppi G."/>
            <person name="Guy B.J."/>
            <person name="Haga K."/>
            <person name="Haiech J."/>
            <person name="Harwood C.R."/>
            <person name="Henaut A."/>
            <person name="Hilbert H."/>
            <person name="Holsappel S."/>
            <person name="Hosono S."/>
            <person name="Hullo M.-F."/>
            <person name="Itaya M."/>
            <person name="Jones L.-M."/>
            <person name="Joris B."/>
            <person name="Karamata D."/>
            <person name="Kasahara Y."/>
            <person name="Klaerr-Blanchard M."/>
            <person name="Klein C."/>
            <person name="Kobayashi Y."/>
            <person name="Koetter P."/>
            <person name="Koningstein G."/>
            <person name="Krogh S."/>
            <person name="Kumano M."/>
            <person name="Kurita K."/>
            <person name="Lapidus A."/>
            <person name="Lardinois S."/>
            <person name="Lauber J."/>
            <person name="Lazarevic V."/>
            <person name="Lee S.-M."/>
            <person name="Levine A."/>
            <person name="Liu H."/>
            <person name="Masuda S."/>
            <person name="Mauel C."/>
            <person name="Medigue C."/>
            <person name="Medina N."/>
            <person name="Mellado R.P."/>
            <person name="Mizuno M."/>
            <person name="Moestl D."/>
            <person name="Nakai S."/>
            <person name="Noback M."/>
            <person name="Noone D."/>
            <person name="O'Reilly M."/>
            <person name="Ogawa K."/>
            <person name="Ogiwara A."/>
            <person name="Oudega B."/>
            <person name="Park S.-H."/>
            <person name="Parro V."/>
            <person name="Pohl T.M."/>
            <person name="Portetelle D."/>
            <person name="Porwollik S."/>
            <person name="Prescott A.M."/>
            <person name="Presecan E."/>
            <person name="Pujic P."/>
            <person name="Purnelle B."/>
            <person name="Rapoport G."/>
            <person name="Rey M."/>
            <person name="Reynolds S."/>
            <person name="Rieger M."/>
            <person name="Rivolta C."/>
            <person name="Rocha E."/>
            <person name="Roche B."/>
            <person name="Rose M."/>
            <person name="Sadaie Y."/>
            <person name="Sato T."/>
            <person name="Scanlan E."/>
            <person name="Schleich S."/>
            <person name="Schroeter R."/>
            <person name="Scoffone F."/>
            <person name="Sekiguchi J."/>
            <person name="Sekowska A."/>
            <person name="Seror S.J."/>
            <person name="Serror P."/>
            <person name="Shin B.-S."/>
            <person name="Soldo B."/>
            <person name="Sorokin A."/>
            <person name="Tacconi E."/>
            <person name="Takagi T."/>
            <person name="Takahashi H."/>
            <person name="Takemaru K."/>
            <person name="Takeuchi M."/>
            <person name="Tamakoshi A."/>
            <person name="Tanaka T."/>
            <person name="Terpstra P."/>
            <person name="Tognoni A."/>
            <person name="Tosato V."/>
            <person name="Uchiyama S."/>
            <person name="Vandenbol M."/>
            <person name="Vannier F."/>
            <person name="Vassarotti A."/>
            <person name="Viari A."/>
            <person name="Wambutt R."/>
            <person name="Wedler E."/>
            <person name="Wedler H."/>
            <person name="Weitzenegger T."/>
            <person name="Winters P."/>
            <person name="Wipat A."/>
            <person name="Yamamoto H."/>
            <person name="Yamane K."/>
            <person name="Yasumoto K."/>
            <person name="Yata K."/>
            <person name="Yoshida K."/>
            <person name="Yoshikawa H.-F."/>
            <person name="Zumstein E."/>
            <person name="Yoshikawa H."/>
            <person name="Danchin A."/>
        </authorList>
    </citation>
    <scope>NUCLEOTIDE SEQUENCE [LARGE SCALE GENOMIC DNA]</scope>
    <source>
        <strain>168</strain>
    </source>
</reference>
<reference key="3">
    <citation type="journal article" date="1999" name="J. Bacteriol.">
        <title>Identification of sigma(B)-dependent genes in Bacillus subtilis using a promoter consensus-directed search and oligonucleotide hybridization.</title>
        <authorList>
            <person name="Petersohn A."/>
            <person name="Bernhardt J."/>
            <person name="Gerth U."/>
            <person name="Hoeper D."/>
            <person name="Koburger T."/>
            <person name="Voelker U."/>
            <person name="Hecker M."/>
        </authorList>
    </citation>
    <scope>FUNCTION</scope>
    <scope>INDUCTION BY STRESS</scope>
</reference>
<reference key="4">
    <citation type="journal article" date="2016" name="Appl. Microbiol. Biotechnol.">
        <title>Identification and characterization of the vanillin dehydrogenase YfmT in Bacillus subtilis 3NA.</title>
        <authorList>
            <person name="Graf N."/>
            <person name="Wenzel M."/>
            <person name="Altenbuchner J."/>
        </authorList>
    </citation>
    <scope>DISRUPTION PHENOTYPE</scope>
    <source>
        <strain>168 / 3NA</strain>
    </source>
</reference>
<reference evidence="7" key="5">
    <citation type="submission" date="2012-02" db="PDB data bank">
        <title>Crystal structure of putative aldehyde dehydrogenase from Bacillus subtilis subsp. subtilis str. 168.</title>
        <authorList>
            <person name="Malashkevich V.N."/>
            <person name="Bhosle R."/>
            <person name="Toro R."/>
            <person name="Seidel R."/>
            <person name="Almo S.C."/>
        </authorList>
    </citation>
    <scope>X-RAY CRYSTALLOGRAPHY (2.50 ANGSTROMS)</scope>
</reference>
<sequence length="485" mass="52821">MSFETLNKSFINGKWTGGESGRTEDILNPYDQSVITTASLATGKQLEDAFDIAQKAQKEWAKSTTEDRKAVLQKARGYLHENRDDIIMMIARETGGTIIKSTIELEQTIAILDEAMTYTGELGGVKEVPSDIEGKTNKIYRLPLGVISSISPFNFPMNLSMRSIAPAIALGNSVVHKPDIQTAISGGTIIAKAFEHAGLPAGVLNVMLTDVKEIGDGMLTNPIPRLISFTGSTAVGRHIGEIAGRAFKRMALELGGNNPFAVLSDADVDRAVDAAIFGKFIHQGQICMIINRIIVHQDVYDEFVEKFTARVKQLPYGDQTDPKTVVGPLINERQIEKALEIIEQAKTDGIELAVEGKRVGNVLTPYVFVGADNNSKIAQTELFAPIATIIKAGSDQEAIDMANDTEYGLSSAVFTSDLEKGEKFALQIDSGMTHVNDQSVNDSPNIAFGGNKASGVGRFGNPWVVEEFTVTKWISIQKQYRKYPF</sequence>
<dbReference type="EC" id="1.2.1.3" evidence="2"/>
<dbReference type="EMBL" id="D83026">
    <property type="protein sequence ID" value="BAA11721.1"/>
    <property type="molecule type" value="Genomic_DNA"/>
</dbReference>
<dbReference type="EMBL" id="AL009126">
    <property type="protein sequence ID" value="CAB15909.1"/>
    <property type="molecule type" value="Genomic_DNA"/>
</dbReference>
<dbReference type="PIR" id="C69584">
    <property type="entry name" value="C69584"/>
</dbReference>
<dbReference type="RefSeq" id="NP_391762.1">
    <property type="nucleotide sequence ID" value="NC_000964.3"/>
</dbReference>
<dbReference type="RefSeq" id="WP_003243062.1">
    <property type="nucleotide sequence ID" value="NZ_OZ025638.1"/>
</dbReference>
<dbReference type="PDB" id="4DNG">
    <property type="method" value="X-ray"/>
    <property type="resolution" value="2.50 A"/>
    <property type="chains" value="A/B=1-485"/>
</dbReference>
<dbReference type="PDBsum" id="4DNG"/>
<dbReference type="SMR" id="P94358"/>
<dbReference type="FunCoup" id="P94358">
    <property type="interactions" value="309"/>
</dbReference>
<dbReference type="STRING" id="224308.BSU38830"/>
<dbReference type="PaxDb" id="224308-BSU38830"/>
<dbReference type="EnsemblBacteria" id="CAB15909">
    <property type="protein sequence ID" value="CAB15909"/>
    <property type="gene ID" value="BSU_38830"/>
</dbReference>
<dbReference type="GeneID" id="937414"/>
<dbReference type="KEGG" id="bsu:BSU38830"/>
<dbReference type="PATRIC" id="fig|224308.179.peg.4202"/>
<dbReference type="eggNOG" id="COG1012">
    <property type="taxonomic scope" value="Bacteria"/>
</dbReference>
<dbReference type="InParanoid" id="P94358"/>
<dbReference type="OrthoDB" id="9762913at2"/>
<dbReference type="PhylomeDB" id="P94358"/>
<dbReference type="BioCyc" id="BSUB:BSU38830-MONOMER"/>
<dbReference type="EvolutionaryTrace" id="P94358"/>
<dbReference type="Proteomes" id="UP000001570">
    <property type="component" value="Chromosome"/>
</dbReference>
<dbReference type="GO" id="GO:0004029">
    <property type="term" value="F:aldehyde dehydrogenase (NAD+) activity"/>
    <property type="evidence" value="ECO:0007669"/>
    <property type="project" value="UniProtKB-EC"/>
</dbReference>
<dbReference type="CDD" id="cd07151">
    <property type="entry name" value="ALDH_HBenzADH"/>
    <property type="match status" value="1"/>
</dbReference>
<dbReference type="FunFam" id="3.40.309.10:FF:000009">
    <property type="entry name" value="Aldehyde dehydrogenase A"/>
    <property type="match status" value="1"/>
</dbReference>
<dbReference type="Gene3D" id="3.40.605.10">
    <property type="entry name" value="Aldehyde Dehydrogenase, Chain A, domain 1"/>
    <property type="match status" value="1"/>
</dbReference>
<dbReference type="Gene3D" id="3.40.309.10">
    <property type="entry name" value="Aldehyde Dehydrogenase, Chain A, domain 2"/>
    <property type="match status" value="1"/>
</dbReference>
<dbReference type="InterPro" id="IPR016161">
    <property type="entry name" value="Ald_DH/histidinol_DH"/>
</dbReference>
<dbReference type="InterPro" id="IPR016163">
    <property type="entry name" value="Ald_DH_C"/>
</dbReference>
<dbReference type="InterPro" id="IPR029510">
    <property type="entry name" value="Ald_DH_CS_GLU"/>
</dbReference>
<dbReference type="InterPro" id="IPR016162">
    <property type="entry name" value="Ald_DH_N"/>
</dbReference>
<dbReference type="InterPro" id="IPR015590">
    <property type="entry name" value="Aldehyde_DH_dom"/>
</dbReference>
<dbReference type="PANTHER" id="PTHR42986">
    <property type="entry name" value="BENZALDEHYDE DEHYDROGENASE YFMT"/>
    <property type="match status" value="1"/>
</dbReference>
<dbReference type="PANTHER" id="PTHR42986:SF1">
    <property type="entry name" value="BENZALDEHYDE DEHYDROGENASE YFMT"/>
    <property type="match status" value="1"/>
</dbReference>
<dbReference type="Pfam" id="PF00171">
    <property type="entry name" value="Aldedh"/>
    <property type="match status" value="1"/>
</dbReference>
<dbReference type="SUPFAM" id="SSF53720">
    <property type="entry name" value="ALDH-like"/>
    <property type="match status" value="1"/>
</dbReference>
<dbReference type="PROSITE" id="PS00687">
    <property type="entry name" value="ALDEHYDE_DEHYDR_GLU"/>
    <property type="match status" value="1"/>
</dbReference>
<comment type="function">
    <text evidence="6">May contribute to protect cells against stress due to ethanol and related compounds.</text>
</comment>
<comment type="catalytic activity">
    <reaction evidence="2">
        <text>an aldehyde + NAD(+) + H2O = a carboxylate + NADH + 2 H(+)</text>
        <dbReference type="Rhea" id="RHEA:16185"/>
        <dbReference type="ChEBI" id="CHEBI:15377"/>
        <dbReference type="ChEBI" id="CHEBI:15378"/>
        <dbReference type="ChEBI" id="CHEBI:17478"/>
        <dbReference type="ChEBI" id="CHEBI:29067"/>
        <dbReference type="ChEBI" id="CHEBI:57540"/>
        <dbReference type="ChEBI" id="CHEBI:57945"/>
        <dbReference type="EC" id="1.2.1.3"/>
    </reaction>
</comment>
<comment type="induction">
    <text evidence="3">Activated by SigB in response to stress due to ethanol.</text>
</comment>
<comment type="disruption phenotype">
    <text evidence="4">No effect on vanillin degradation.</text>
</comment>
<comment type="similarity">
    <text evidence="5">Belongs to the aldehyde dehydrogenase family.</text>
</comment>
<evidence type="ECO:0000250" key="1"/>
<evidence type="ECO:0000255" key="2">
    <source>
        <dbReference type="PROSITE-ProRule" id="PRU10007"/>
    </source>
</evidence>
<evidence type="ECO:0000269" key="3">
    <source>
    </source>
</evidence>
<evidence type="ECO:0000269" key="4">
    <source>
    </source>
</evidence>
<evidence type="ECO:0000305" key="5"/>
<evidence type="ECO:0000305" key="6">
    <source>
    </source>
</evidence>
<evidence type="ECO:0007744" key="7">
    <source>
        <dbReference type="PDB" id="4DNG"/>
    </source>
</evidence>
<evidence type="ECO:0007829" key="8">
    <source>
        <dbReference type="PDB" id="4DNG"/>
    </source>
</evidence>
<gene>
    <name type="primary">aldY</name>
    <name type="synonym">yxkE</name>
    <name type="ordered locus">BSU38830</name>
</gene>
<accession>P94358</accession>
<accession>Q794X7</accession>
<feature type="chain" id="PRO_0000360858" description="Putative aldehyde dehydrogenase AldY">
    <location>
        <begin position="1"/>
        <end position="485"/>
    </location>
</feature>
<feature type="active site" evidence="2">
    <location>
        <position position="253"/>
    </location>
</feature>
<feature type="active site" evidence="2">
    <location>
        <position position="287"/>
    </location>
</feature>
<feature type="binding site" evidence="1">
    <location>
        <begin position="231"/>
        <end position="236"/>
    </location>
    <ligand>
        <name>NAD(+)</name>
        <dbReference type="ChEBI" id="CHEBI:57540"/>
    </ligand>
</feature>
<feature type="helix" evidence="8">
    <location>
        <begin position="3"/>
        <end position="5"/>
    </location>
</feature>
<feature type="strand" evidence="8">
    <location>
        <begin position="8"/>
        <end position="11"/>
    </location>
</feature>
<feature type="strand" evidence="8">
    <location>
        <begin position="14"/>
        <end position="16"/>
    </location>
</feature>
<feature type="strand" evidence="8">
    <location>
        <begin position="19"/>
        <end position="21"/>
    </location>
</feature>
<feature type="strand" evidence="8">
    <location>
        <begin position="23"/>
        <end position="27"/>
    </location>
</feature>
<feature type="turn" evidence="8">
    <location>
        <begin position="29"/>
        <end position="31"/>
    </location>
</feature>
<feature type="strand" evidence="8">
    <location>
        <begin position="34"/>
        <end position="39"/>
    </location>
</feature>
<feature type="helix" evidence="8">
    <location>
        <begin position="43"/>
        <end position="60"/>
    </location>
</feature>
<feature type="helix" evidence="8">
    <location>
        <begin position="65"/>
        <end position="81"/>
    </location>
</feature>
<feature type="helix" evidence="8">
    <location>
        <begin position="83"/>
        <end position="94"/>
    </location>
</feature>
<feature type="helix" evidence="8">
    <location>
        <begin position="98"/>
        <end position="118"/>
    </location>
</feature>
<feature type="helix" evidence="8">
    <location>
        <begin position="119"/>
        <end position="121"/>
    </location>
</feature>
<feature type="strand" evidence="8">
    <location>
        <begin position="135"/>
        <end position="143"/>
    </location>
</feature>
<feature type="strand" evidence="8">
    <location>
        <begin position="146"/>
        <end position="150"/>
    </location>
</feature>
<feature type="strand" evidence="8">
    <location>
        <begin position="153"/>
        <end position="155"/>
    </location>
</feature>
<feature type="helix" evidence="8">
    <location>
        <begin position="156"/>
        <end position="169"/>
    </location>
</feature>
<feature type="strand" evidence="8">
    <location>
        <begin position="173"/>
        <end position="177"/>
    </location>
</feature>
<feature type="helix" evidence="8">
    <location>
        <begin position="180"/>
        <end position="182"/>
    </location>
</feature>
<feature type="helix" evidence="8">
    <location>
        <begin position="183"/>
        <end position="186"/>
    </location>
</feature>
<feature type="helix" evidence="8">
    <location>
        <begin position="188"/>
        <end position="196"/>
    </location>
</feature>
<feature type="strand" evidence="8">
    <location>
        <begin position="203"/>
        <end position="206"/>
    </location>
</feature>
<feature type="helix" evidence="8">
    <location>
        <begin position="211"/>
        <end position="214"/>
    </location>
</feature>
<feature type="helix" evidence="8">
    <location>
        <begin position="217"/>
        <end position="220"/>
    </location>
</feature>
<feature type="strand" evidence="8">
    <location>
        <begin position="225"/>
        <end position="231"/>
    </location>
</feature>
<feature type="helix" evidence="8">
    <location>
        <begin position="233"/>
        <end position="246"/>
    </location>
</feature>
<feature type="strand" evidence="8">
    <location>
        <begin position="249"/>
        <end position="254"/>
    </location>
</feature>
<feature type="strand" evidence="8">
    <location>
        <begin position="258"/>
        <end position="262"/>
    </location>
</feature>
<feature type="helix" evidence="8">
    <location>
        <begin position="268"/>
        <end position="279"/>
    </location>
</feature>
<feature type="strand" evidence="8">
    <location>
        <begin position="290"/>
        <end position="296"/>
    </location>
</feature>
<feature type="helix" evidence="8">
    <location>
        <begin position="297"/>
        <end position="313"/>
    </location>
</feature>
<feature type="helix" evidence="8">
    <location>
        <begin position="332"/>
        <end position="347"/>
    </location>
</feature>
<feature type="strand" evidence="8">
    <location>
        <begin position="351"/>
        <end position="354"/>
    </location>
</feature>
<feature type="strand" evidence="8">
    <location>
        <begin position="366"/>
        <end position="370"/>
    </location>
</feature>
<feature type="helix" evidence="8">
    <location>
        <begin position="376"/>
        <end position="379"/>
    </location>
</feature>
<feature type="strand" evidence="8">
    <location>
        <begin position="384"/>
        <end position="394"/>
    </location>
</feature>
<feature type="helix" evidence="8">
    <location>
        <begin position="395"/>
        <end position="403"/>
    </location>
</feature>
<feature type="strand" evidence="8">
    <location>
        <begin position="409"/>
        <end position="414"/>
    </location>
</feature>
<feature type="helix" evidence="8">
    <location>
        <begin position="418"/>
        <end position="425"/>
    </location>
</feature>
<feature type="strand" evidence="8">
    <location>
        <begin position="430"/>
        <end position="436"/>
    </location>
</feature>
<feature type="helix" evidence="8">
    <location>
        <begin position="462"/>
        <end position="468"/>
    </location>
</feature>
<feature type="strand" evidence="8">
    <location>
        <begin position="469"/>
        <end position="477"/>
    </location>
</feature>
<protein>
    <recommendedName>
        <fullName evidence="2">Putative aldehyde dehydrogenase AldY</fullName>
        <ecNumber evidence="2">1.2.1.3</ecNumber>
    </recommendedName>
</protein>
<organism>
    <name type="scientific">Bacillus subtilis (strain 168)</name>
    <dbReference type="NCBI Taxonomy" id="224308"/>
    <lineage>
        <taxon>Bacteria</taxon>
        <taxon>Bacillati</taxon>
        <taxon>Bacillota</taxon>
        <taxon>Bacilli</taxon>
        <taxon>Bacillales</taxon>
        <taxon>Bacillaceae</taxon>
        <taxon>Bacillus</taxon>
    </lineage>
</organism>